<feature type="chain" id="PRO_0000298470" description="NADH-quinone oxidoreductase subunit I 1">
    <location>
        <begin position="1"/>
        <end position="152"/>
    </location>
</feature>
<feature type="domain" description="4Fe-4S ferredoxin-type 1" evidence="1">
    <location>
        <begin position="53"/>
        <end position="83"/>
    </location>
</feature>
<feature type="domain" description="4Fe-4S ferredoxin-type 2" evidence="1">
    <location>
        <begin position="94"/>
        <end position="123"/>
    </location>
</feature>
<feature type="binding site" evidence="1">
    <location>
        <position position="63"/>
    </location>
    <ligand>
        <name>[4Fe-4S] cluster</name>
        <dbReference type="ChEBI" id="CHEBI:49883"/>
        <label>1</label>
    </ligand>
</feature>
<feature type="binding site" evidence="1">
    <location>
        <position position="66"/>
    </location>
    <ligand>
        <name>[4Fe-4S] cluster</name>
        <dbReference type="ChEBI" id="CHEBI:49883"/>
        <label>1</label>
    </ligand>
</feature>
<feature type="binding site" evidence="1">
    <location>
        <position position="69"/>
    </location>
    <ligand>
        <name>[4Fe-4S] cluster</name>
        <dbReference type="ChEBI" id="CHEBI:49883"/>
        <label>1</label>
    </ligand>
</feature>
<feature type="binding site" evidence="1">
    <location>
        <position position="73"/>
    </location>
    <ligand>
        <name>[4Fe-4S] cluster</name>
        <dbReference type="ChEBI" id="CHEBI:49883"/>
        <label>2</label>
    </ligand>
</feature>
<feature type="binding site" evidence="1">
    <location>
        <position position="103"/>
    </location>
    <ligand>
        <name>[4Fe-4S] cluster</name>
        <dbReference type="ChEBI" id="CHEBI:49883"/>
        <label>2</label>
    </ligand>
</feature>
<feature type="binding site" evidence="1">
    <location>
        <position position="106"/>
    </location>
    <ligand>
        <name>[4Fe-4S] cluster</name>
        <dbReference type="ChEBI" id="CHEBI:49883"/>
        <label>2</label>
    </ligand>
</feature>
<feature type="binding site" evidence="1">
    <location>
        <position position="109"/>
    </location>
    <ligand>
        <name>[4Fe-4S] cluster</name>
        <dbReference type="ChEBI" id="CHEBI:49883"/>
        <label>2</label>
    </ligand>
</feature>
<feature type="binding site" evidence="1">
    <location>
        <position position="113"/>
    </location>
    <ligand>
        <name>[4Fe-4S] cluster</name>
        <dbReference type="ChEBI" id="CHEBI:49883"/>
        <label>1</label>
    </ligand>
</feature>
<comment type="function">
    <text evidence="1">NDH-1 shuttles electrons from NADH, via FMN and iron-sulfur (Fe-S) centers, to quinones in the respiratory chain. The immediate electron acceptor for the enzyme in this species is believed to be ubiquinone. Couples the redox reaction to proton translocation (for every two electrons transferred, four hydrogen ions are translocated across the cytoplasmic membrane), and thus conserves the redox energy in a proton gradient.</text>
</comment>
<comment type="catalytic activity">
    <reaction evidence="1">
        <text>a quinone + NADH + 5 H(+)(in) = a quinol + NAD(+) + 4 H(+)(out)</text>
        <dbReference type="Rhea" id="RHEA:57888"/>
        <dbReference type="ChEBI" id="CHEBI:15378"/>
        <dbReference type="ChEBI" id="CHEBI:24646"/>
        <dbReference type="ChEBI" id="CHEBI:57540"/>
        <dbReference type="ChEBI" id="CHEBI:57945"/>
        <dbReference type="ChEBI" id="CHEBI:132124"/>
    </reaction>
</comment>
<comment type="cofactor">
    <cofactor evidence="1">
        <name>[4Fe-4S] cluster</name>
        <dbReference type="ChEBI" id="CHEBI:49883"/>
    </cofactor>
    <text evidence="1">Binds 2 [4Fe-4S] clusters per subunit.</text>
</comment>
<comment type="subunit">
    <text evidence="1">NDH-1 is composed of 14 different subunits. Subunits NuoA, H, J, K, L, M, N constitute the membrane sector of the complex.</text>
</comment>
<comment type="subcellular location">
    <subcellularLocation>
        <location evidence="1">Cell inner membrane</location>
        <topology evidence="1">Peripheral membrane protein</topology>
    </subcellularLocation>
</comment>
<comment type="similarity">
    <text evidence="1">Belongs to the complex I 23 kDa subunit family.</text>
</comment>
<evidence type="ECO:0000255" key="1">
    <source>
        <dbReference type="HAMAP-Rule" id="MF_01351"/>
    </source>
</evidence>
<accession>Q1IS57</accession>
<reference key="1">
    <citation type="journal article" date="2009" name="Appl. Environ. Microbiol.">
        <title>Three genomes from the phylum Acidobacteria provide insight into the lifestyles of these microorganisms in soils.</title>
        <authorList>
            <person name="Ward N.L."/>
            <person name="Challacombe J.F."/>
            <person name="Janssen P.H."/>
            <person name="Henrissat B."/>
            <person name="Coutinho P.M."/>
            <person name="Wu M."/>
            <person name="Xie G."/>
            <person name="Haft D.H."/>
            <person name="Sait M."/>
            <person name="Badger J."/>
            <person name="Barabote R.D."/>
            <person name="Bradley B."/>
            <person name="Brettin T.S."/>
            <person name="Brinkac L.M."/>
            <person name="Bruce D."/>
            <person name="Creasy T."/>
            <person name="Daugherty S.C."/>
            <person name="Davidsen T.M."/>
            <person name="DeBoy R.T."/>
            <person name="Detter J.C."/>
            <person name="Dodson R.J."/>
            <person name="Durkin A.S."/>
            <person name="Ganapathy A."/>
            <person name="Gwinn-Giglio M."/>
            <person name="Han C.S."/>
            <person name="Khouri H."/>
            <person name="Kiss H."/>
            <person name="Kothari S.P."/>
            <person name="Madupu R."/>
            <person name="Nelson K.E."/>
            <person name="Nelson W.C."/>
            <person name="Paulsen I."/>
            <person name="Penn K."/>
            <person name="Ren Q."/>
            <person name="Rosovitz M.J."/>
            <person name="Selengut J.D."/>
            <person name="Shrivastava S."/>
            <person name="Sullivan S.A."/>
            <person name="Tapia R."/>
            <person name="Thompson L.S."/>
            <person name="Watkins K.L."/>
            <person name="Yang Q."/>
            <person name="Yu C."/>
            <person name="Zafar N."/>
            <person name="Zhou L."/>
            <person name="Kuske C.R."/>
        </authorList>
    </citation>
    <scope>NUCLEOTIDE SEQUENCE [LARGE SCALE GENOMIC DNA]</scope>
    <source>
        <strain>Ellin345</strain>
    </source>
</reference>
<gene>
    <name evidence="1" type="primary">nuoI1</name>
    <name type="ordered locus">Acid345_1291</name>
</gene>
<sequence length="152" mass="17254">MSIAPLLRKVFLIDLIKGLSITFKYQAPKDCQTEQYPQERPVITDRFRGQPMMKLGENGETLCIGCNLCALACPENLIAMKSDRDPVTKKKVMVTYVYDVSRCMFCGLCEEACPTQSLKLGTGYEMALYSREGMVLDRKVLEHRTAPEPYEK</sequence>
<keyword id="KW-0004">4Fe-4S</keyword>
<keyword id="KW-0997">Cell inner membrane</keyword>
<keyword id="KW-1003">Cell membrane</keyword>
<keyword id="KW-0408">Iron</keyword>
<keyword id="KW-0411">Iron-sulfur</keyword>
<keyword id="KW-0472">Membrane</keyword>
<keyword id="KW-0479">Metal-binding</keyword>
<keyword id="KW-0520">NAD</keyword>
<keyword id="KW-0874">Quinone</keyword>
<keyword id="KW-1185">Reference proteome</keyword>
<keyword id="KW-0677">Repeat</keyword>
<keyword id="KW-1278">Translocase</keyword>
<keyword id="KW-0830">Ubiquinone</keyword>
<dbReference type="EC" id="7.1.1.-" evidence="1"/>
<dbReference type="EMBL" id="CP000360">
    <property type="protein sequence ID" value="ABF40293.1"/>
    <property type="molecule type" value="Genomic_DNA"/>
</dbReference>
<dbReference type="RefSeq" id="WP_011522095.1">
    <property type="nucleotide sequence ID" value="NC_008009.1"/>
</dbReference>
<dbReference type="SMR" id="Q1IS57"/>
<dbReference type="STRING" id="204669.Acid345_1291"/>
<dbReference type="EnsemblBacteria" id="ABF40293">
    <property type="protein sequence ID" value="ABF40293"/>
    <property type="gene ID" value="Acid345_1291"/>
</dbReference>
<dbReference type="KEGG" id="aba:Acid345_1291"/>
<dbReference type="eggNOG" id="COG1143">
    <property type="taxonomic scope" value="Bacteria"/>
</dbReference>
<dbReference type="HOGENOM" id="CLU_067218_4_3_0"/>
<dbReference type="OrthoDB" id="9803192at2"/>
<dbReference type="Proteomes" id="UP000002432">
    <property type="component" value="Chromosome"/>
</dbReference>
<dbReference type="GO" id="GO:0005886">
    <property type="term" value="C:plasma membrane"/>
    <property type="evidence" value="ECO:0007669"/>
    <property type="project" value="UniProtKB-SubCell"/>
</dbReference>
<dbReference type="GO" id="GO:0051539">
    <property type="term" value="F:4 iron, 4 sulfur cluster binding"/>
    <property type="evidence" value="ECO:0007669"/>
    <property type="project" value="UniProtKB-KW"/>
</dbReference>
<dbReference type="GO" id="GO:0005506">
    <property type="term" value="F:iron ion binding"/>
    <property type="evidence" value="ECO:0007669"/>
    <property type="project" value="UniProtKB-UniRule"/>
</dbReference>
<dbReference type="GO" id="GO:0050136">
    <property type="term" value="F:NADH:ubiquinone reductase (non-electrogenic) activity"/>
    <property type="evidence" value="ECO:0007669"/>
    <property type="project" value="UniProtKB-UniRule"/>
</dbReference>
<dbReference type="GO" id="GO:0048038">
    <property type="term" value="F:quinone binding"/>
    <property type="evidence" value="ECO:0007669"/>
    <property type="project" value="UniProtKB-KW"/>
</dbReference>
<dbReference type="Gene3D" id="3.30.70.3270">
    <property type="match status" value="1"/>
</dbReference>
<dbReference type="HAMAP" id="MF_01351">
    <property type="entry name" value="NDH1_NuoI"/>
    <property type="match status" value="1"/>
</dbReference>
<dbReference type="InterPro" id="IPR017896">
    <property type="entry name" value="4Fe4S_Fe-S-bd"/>
</dbReference>
<dbReference type="InterPro" id="IPR017900">
    <property type="entry name" value="4Fe4S_Fe_S_CS"/>
</dbReference>
<dbReference type="InterPro" id="IPR010226">
    <property type="entry name" value="NADH_quinone_OxRdtase_chainI"/>
</dbReference>
<dbReference type="PANTHER" id="PTHR10849">
    <property type="entry name" value="NADH DEHYDROGENASE UBIQUINONE IRON-SULFUR PROTEIN 8, MITOCHONDRIAL"/>
    <property type="match status" value="1"/>
</dbReference>
<dbReference type="PANTHER" id="PTHR10849:SF24">
    <property type="entry name" value="NADH-QUINONE OXIDOREDUCTASE SUBUNIT I 2"/>
    <property type="match status" value="1"/>
</dbReference>
<dbReference type="Pfam" id="PF12838">
    <property type="entry name" value="Fer4_7"/>
    <property type="match status" value="1"/>
</dbReference>
<dbReference type="SUPFAM" id="SSF54862">
    <property type="entry name" value="4Fe-4S ferredoxins"/>
    <property type="match status" value="1"/>
</dbReference>
<dbReference type="PROSITE" id="PS00198">
    <property type="entry name" value="4FE4S_FER_1"/>
    <property type="match status" value="2"/>
</dbReference>
<dbReference type="PROSITE" id="PS51379">
    <property type="entry name" value="4FE4S_FER_2"/>
    <property type="match status" value="2"/>
</dbReference>
<protein>
    <recommendedName>
        <fullName evidence="1">NADH-quinone oxidoreductase subunit I 1</fullName>
        <ecNumber evidence="1">7.1.1.-</ecNumber>
    </recommendedName>
    <alternativeName>
        <fullName evidence="1">NADH dehydrogenase I subunit I 1</fullName>
    </alternativeName>
    <alternativeName>
        <fullName evidence="1">NDH-1 subunit I 1</fullName>
    </alternativeName>
</protein>
<organism>
    <name type="scientific">Koribacter versatilis (strain Ellin345)</name>
    <dbReference type="NCBI Taxonomy" id="204669"/>
    <lineage>
        <taxon>Bacteria</taxon>
        <taxon>Pseudomonadati</taxon>
        <taxon>Acidobacteriota</taxon>
        <taxon>Terriglobia</taxon>
        <taxon>Terriglobales</taxon>
        <taxon>Candidatus Korobacteraceae</taxon>
        <taxon>Candidatus Korobacter</taxon>
    </lineage>
</organism>
<proteinExistence type="inferred from homology"/>
<name>NUOI1_KORVE</name>